<name>SYK_NOSS1</name>
<organism>
    <name type="scientific">Nostoc sp. (strain PCC 7120 / SAG 25.82 / UTEX 2576)</name>
    <dbReference type="NCBI Taxonomy" id="103690"/>
    <lineage>
        <taxon>Bacteria</taxon>
        <taxon>Bacillati</taxon>
        <taxon>Cyanobacteriota</taxon>
        <taxon>Cyanophyceae</taxon>
        <taxon>Nostocales</taxon>
        <taxon>Nostocaceae</taxon>
        <taxon>Nostoc</taxon>
    </lineage>
</organism>
<evidence type="ECO:0000255" key="1">
    <source>
        <dbReference type="HAMAP-Rule" id="MF_00252"/>
    </source>
</evidence>
<proteinExistence type="inferred from homology"/>
<reference key="1">
    <citation type="journal article" date="2001" name="DNA Res.">
        <title>Complete genomic sequence of the filamentous nitrogen-fixing cyanobacterium Anabaena sp. strain PCC 7120.</title>
        <authorList>
            <person name="Kaneko T."/>
            <person name="Nakamura Y."/>
            <person name="Wolk C.P."/>
            <person name="Kuritz T."/>
            <person name="Sasamoto S."/>
            <person name="Watanabe A."/>
            <person name="Iriguchi M."/>
            <person name="Ishikawa A."/>
            <person name="Kawashima K."/>
            <person name="Kimura T."/>
            <person name="Kishida Y."/>
            <person name="Kohara M."/>
            <person name="Matsumoto M."/>
            <person name="Matsuno A."/>
            <person name="Muraki A."/>
            <person name="Nakazaki N."/>
            <person name="Shimpo S."/>
            <person name="Sugimoto M."/>
            <person name="Takazawa M."/>
            <person name="Yamada M."/>
            <person name="Yasuda M."/>
            <person name="Tabata S."/>
        </authorList>
    </citation>
    <scope>NUCLEOTIDE SEQUENCE [LARGE SCALE GENOMIC DNA]</scope>
    <source>
        <strain>PCC 7120 / SAG 25.82 / UTEX 2576</strain>
    </source>
</reference>
<dbReference type="EC" id="6.1.1.6" evidence="1"/>
<dbReference type="EMBL" id="BA000019">
    <property type="protein sequence ID" value="BAB75770.1"/>
    <property type="molecule type" value="Genomic_DNA"/>
</dbReference>
<dbReference type="PIR" id="AH2314">
    <property type="entry name" value="AH2314"/>
</dbReference>
<dbReference type="RefSeq" id="WP_010998211.1">
    <property type="nucleotide sequence ID" value="NZ_RSCN01000023.1"/>
</dbReference>
<dbReference type="SMR" id="Q8YPW9"/>
<dbReference type="STRING" id="103690.gene:10496114"/>
<dbReference type="KEGG" id="ana:all4071"/>
<dbReference type="eggNOG" id="COG1190">
    <property type="taxonomic scope" value="Bacteria"/>
</dbReference>
<dbReference type="OrthoDB" id="9802326at2"/>
<dbReference type="Proteomes" id="UP000002483">
    <property type="component" value="Chromosome"/>
</dbReference>
<dbReference type="GO" id="GO:0005829">
    <property type="term" value="C:cytosol"/>
    <property type="evidence" value="ECO:0007669"/>
    <property type="project" value="TreeGrafter"/>
</dbReference>
<dbReference type="GO" id="GO:0005524">
    <property type="term" value="F:ATP binding"/>
    <property type="evidence" value="ECO:0007669"/>
    <property type="project" value="UniProtKB-UniRule"/>
</dbReference>
<dbReference type="GO" id="GO:0004824">
    <property type="term" value="F:lysine-tRNA ligase activity"/>
    <property type="evidence" value="ECO:0007669"/>
    <property type="project" value="UniProtKB-UniRule"/>
</dbReference>
<dbReference type="GO" id="GO:0000287">
    <property type="term" value="F:magnesium ion binding"/>
    <property type="evidence" value="ECO:0007669"/>
    <property type="project" value="UniProtKB-UniRule"/>
</dbReference>
<dbReference type="GO" id="GO:0000049">
    <property type="term" value="F:tRNA binding"/>
    <property type="evidence" value="ECO:0007669"/>
    <property type="project" value="TreeGrafter"/>
</dbReference>
<dbReference type="GO" id="GO:0006430">
    <property type="term" value="P:lysyl-tRNA aminoacylation"/>
    <property type="evidence" value="ECO:0007669"/>
    <property type="project" value="UniProtKB-UniRule"/>
</dbReference>
<dbReference type="CDD" id="cd00775">
    <property type="entry name" value="LysRS_core"/>
    <property type="match status" value="1"/>
</dbReference>
<dbReference type="CDD" id="cd04322">
    <property type="entry name" value="LysRS_N"/>
    <property type="match status" value="1"/>
</dbReference>
<dbReference type="FunFam" id="2.40.50.140:FF:000024">
    <property type="entry name" value="Lysine--tRNA ligase"/>
    <property type="match status" value="1"/>
</dbReference>
<dbReference type="FunFam" id="3.30.930.10:FF:000067">
    <property type="entry name" value="Lysine--tRNA ligase"/>
    <property type="match status" value="1"/>
</dbReference>
<dbReference type="Gene3D" id="3.30.930.10">
    <property type="entry name" value="Bira Bifunctional Protein, Domain 2"/>
    <property type="match status" value="1"/>
</dbReference>
<dbReference type="Gene3D" id="2.40.50.140">
    <property type="entry name" value="Nucleic acid-binding proteins"/>
    <property type="match status" value="1"/>
</dbReference>
<dbReference type="HAMAP" id="MF_00252">
    <property type="entry name" value="Lys_tRNA_synth_class2"/>
    <property type="match status" value="1"/>
</dbReference>
<dbReference type="InterPro" id="IPR004364">
    <property type="entry name" value="Aa-tRNA-synt_II"/>
</dbReference>
<dbReference type="InterPro" id="IPR006195">
    <property type="entry name" value="aa-tRNA-synth_II"/>
</dbReference>
<dbReference type="InterPro" id="IPR045864">
    <property type="entry name" value="aa-tRNA-synth_II/BPL/LPL"/>
</dbReference>
<dbReference type="InterPro" id="IPR025309">
    <property type="entry name" value="KTSC_dom"/>
</dbReference>
<dbReference type="InterPro" id="IPR002313">
    <property type="entry name" value="Lys-tRNA-ligase_II"/>
</dbReference>
<dbReference type="InterPro" id="IPR034762">
    <property type="entry name" value="Lys-tRNA-ligase_II_bac/euk"/>
</dbReference>
<dbReference type="InterPro" id="IPR044136">
    <property type="entry name" value="Lys-tRNA-ligase_II_N"/>
</dbReference>
<dbReference type="InterPro" id="IPR018149">
    <property type="entry name" value="Lys-tRNA-synth_II_C"/>
</dbReference>
<dbReference type="InterPro" id="IPR012340">
    <property type="entry name" value="NA-bd_OB-fold"/>
</dbReference>
<dbReference type="InterPro" id="IPR004365">
    <property type="entry name" value="NA-bd_OB_tRNA"/>
</dbReference>
<dbReference type="NCBIfam" id="TIGR00499">
    <property type="entry name" value="lysS_bact"/>
    <property type="match status" value="1"/>
</dbReference>
<dbReference type="NCBIfam" id="NF001756">
    <property type="entry name" value="PRK00484.1"/>
    <property type="match status" value="1"/>
</dbReference>
<dbReference type="PANTHER" id="PTHR42918:SF15">
    <property type="entry name" value="LYSINE--TRNA LIGASE, CHLOROPLASTIC_MITOCHONDRIAL"/>
    <property type="match status" value="1"/>
</dbReference>
<dbReference type="PANTHER" id="PTHR42918">
    <property type="entry name" value="LYSYL-TRNA SYNTHETASE"/>
    <property type="match status" value="1"/>
</dbReference>
<dbReference type="Pfam" id="PF13619">
    <property type="entry name" value="KTSC"/>
    <property type="match status" value="1"/>
</dbReference>
<dbReference type="Pfam" id="PF00152">
    <property type="entry name" value="tRNA-synt_2"/>
    <property type="match status" value="1"/>
</dbReference>
<dbReference type="Pfam" id="PF01336">
    <property type="entry name" value="tRNA_anti-codon"/>
    <property type="match status" value="1"/>
</dbReference>
<dbReference type="PIRSF" id="PIRSF039101">
    <property type="entry name" value="LysRS2"/>
    <property type="match status" value="1"/>
</dbReference>
<dbReference type="PRINTS" id="PR00982">
    <property type="entry name" value="TRNASYNTHLYS"/>
</dbReference>
<dbReference type="SUPFAM" id="SSF55681">
    <property type="entry name" value="Class II aaRS and biotin synthetases"/>
    <property type="match status" value="1"/>
</dbReference>
<dbReference type="SUPFAM" id="SSF50249">
    <property type="entry name" value="Nucleic acid-binding proteins"/>
    <property type="match status" value="1"/>
</dbReference>
<dbReference type="PROSITE" id="PS50862">
    <property type="entry name" value="AA_TRNA_LIGASE_II"/>
    <property type="match status" value="1"/>
</dbReference>
<sequence>MSEEDIRAARLEKVEQLKQLGTNPYAYRWESTHHAAQLQEKFADLTSGEEVETEVAIAGRIMARRVFGKLAFFTLEDETGTIQLYLEKNRIQESMAEIDANAFNHLKQLTDVGDILGAKGTIKRTEKGELSVYVKEYTILTKSLLPLPDKWHGLTDVAKRYRQRYVDLIVNPEVRQTFRRRAQITAGIRRYLEQRDFLEIETPVLQSEAGGADARPFVTYHNTLEMELYLRIATELHLKRLIVGGFEKVFELGRIFRNEGISTRHNPEFTSIEVYQAYADYNDMMALTEGIITTVAQDVLGTLQITYQGETVDLTPPWRRVTMHDLVKEYTGLDFHSFQTLEEAKSAGKNAGIPGVDEAQTIGKILNLAFEEKVETKLIQPTFVIDYPVEISPLAKPHRSQPGLVERFELFIVGRETANSFSELTDPIDQRERLEAQAAKKAAGDLEAQGVDEDFLTALEYGMPPTGGLGIGIDRLVMLLTDSASIRDVIAFPLLKPEGSFIKAYRYEPTTQTLTLEFDSGSIYEYFKVPLTVKEELDNAPSKGQYFHKFIKGQFKYEQLS</sequence>
<gene>
    <name evidence="1" type="primary">lysS</name>
    <name type="ordered locus">all4071</name>
</gene>
<protein>
    <recommendedName>
        <fullName evidence="1">Lysine--tRNA ligase</fullName>
        <ecNumber evidence="1">6.1.1.6</ecNumber>
    </recommendedName>
    <alternativeName>
        <fullName evidence="1">Lysyl-tRNA synthetase</fullName>
        <shortName evidence="1">LysRS</shortName>
    </alternativeName>
</protein>
<accession>Q8YPW9</accession>
<keyword id="KW-0030">Aminoacyl-tRNA synthetase</keyword>
<keyword id="KW-0067">ATP-binding</keyword>
<keyword id="KW-0963">Cytoplasm</keyword>
<keyword id="KW-0436">Ligase</keyword>
<keyword id="KW-0460">Magnesium</keyword>
<keyword id="KW-0479">Metal-binding</keyword>
<keyword id="KW-0547">Nucleotide-binding</keyword>
<keyword id="KW-0648">Protein biosynthesis</keyword>
<keyword id="KW-1185">Reference proteome</keyword>
<comment type="catalytic activity">
    <reaction evidence="1">
        <text>tRNA(Lys) + L-lysine + ATP = L-lysyl-tRNA(Lys) + AMP + diphosphate</text>
        <dbReference type="Rhea" id="RHEA:20792"/>
        <dbReference type="Rhea" id="RHEA-COMP:9696"/>
        <dbReference type="Rhea" id="RHEA-COMP:9697"/>
        <dbReference type="ChEBI" id="CHEBI:30616"/>
        <dbReference type="ChEBI" id="CHEBI:32551"/>
        <dbReference type="ChEBI" id="CHEBI:33019"/>
        <dbReference type="ChEBI" id="CHEBI:78442"/>
        <dbReference type="ChEBI" id="CHEBI:78529"/>
        <dbReference type="ChEBI" id="CHEBI:456215"/>
        <dbReference type="EC" id="6.1.1.6"/>
    </reaction>
</comment>
<comment type="cofactor">
    <cofactor evidence="1">
        <name>Mg(2+)</name>
        <dbReference type="ChEBI" id="CHEBI:18420"/>
    </cofactor>
    <text evidence="1">Binds 3 Mg(2+) ions per subunit.</text>
</comment>
<comment type="subunit">
    <text evidence="1">Homodimer.</text>
</comment>
<comment type="subcellular location">
    <subcellularLocation>
        <location evidence="1">Cytoplasm</location>
    </subcellularLocation>
</comment>
<comment type="similarity">
    <text evidence="1">Belongs to the class-II aminoacyl-tRNA synthetase family.</text>
</comment>
<feature type="chain" id="PRO_0000152594" description="Lysine--tRNA ligase">
    <location>
        <begin position="1"/>
        <end position="561"/>
    </location>
</feature>
<feature type="binding site" evidence="1">
    <location>
        <position position="409"/>
    </location>
    <ligand>
        <name>Mg(2+)</name>
        <dbReference type="ChEBI" id="CHEBI:18420"/>
        <label>1</label>
    </ligand>
</feature>
<feature type="binding site" evidence="1">
    <location>
        <position position="416"/>
    </location>
    <ligand>
        <name>Mg(2+)</name>
        <dbReference type="ChEBI" id="CHEBI:18420"/>
        <label>1</label>
    </ligand>
</feature>
<feature type="binding site" evidence="1">
    <location>
        <position position="416"/>
    </location>
    <ligand>
        <name>Mg(2+)</name>
        <dbReference type="ChEBI" id="CHEBI:18420"/>
        <label>2</label>
    </ligand>
</feature>